<name>Y3893_DICDI</name>
<comment type="function">
    <text evidence="1">Probable E3 ubiquitin-protein ligase.</text>
</comment>
<comment type="pathway">
    <text>Protein modification; protein ubiquitination.</text>
</comment>
<comment type="similarity">
    <text evidence="7">Belongs to the UBR4 family.</text>
</comment>
<protein>
    <recommendedName>
        <fullName>Probable E3 ubiquitin-protein ligase DDB_G0283893</fullName>
        <ecNumber>2.3.2.-</ecNumber>
    </recommendedName>
    <alternativeName>
        <fullName evidence="7">Probable E3 ubiquitin-protein transferase DDB_G0283893</fullName>
    </alternativeName>
</protein>
<keyword id="KW-0175">Coiled coil</keyword>
<keyword id="KW-0479">Metal-binding</keyword>
<keyword id="KW-1185">Reference proteome</keyword>
<keyword id="KW-0677">Repeat</keyword>
<keyword id="KW-0808">Transferase</keyword>
<keyword id="KW-0833">Ubl conjugation pathway</keyword>
<keyword id="KW-0862">Zinc</keyword>
<keyword id="KW-0863">Zinc-finger</keyword>
<organism>
    <name type="scientific">Dictyostelium discoideum</name>
    <name type="common">Social amoeba</name>
    <dbReference type="NCBI Taxonomy" id="44689"/>
    <lineage>
        <taxon>Eukaryota</taxon>
        <taxon>Amoebozoa</taxon>
        <taxon>Evosea</taxon>
        <taxon>Eumycetozoa</taxon>
        <taxon>Dictyostelia</taxon>
        <taxon>Dictyosteliales</taxon>
        <taxon>Dictyosteliaceae</taxon>
        <taxon>Dictyostelium</taxon>
    </lineage>
</organism>
<dbReference type="EC" id="2.3.2.-"/>
<dbReference type="EMBL" id="AAFI02000057">
    <property type="protein sequence ID" value="EAL65561.2"/>
    <property type="molecule type" value="Genomic_DNA"/>
</dbReference>
<dbReference type="RefSeq" id="XP_638906.2">
    <property type="nucleotide sequence ID" value="XM_633814.2"/>
</dbReference>
<dbReference type="SMR" id="Q54QG5"/>
<dbReference type="FunCoup" id="Q54QG5">
    <property type="interactions" value="458"/>
</dbReference>
<dbReference type="STRING" id="44689.Q54QG5"/>
<dbReference type="GlyGen" id="Q54QG5">
    <property type="glycosylation" value="3 sites"/>
</dbReference>
<dbReference type="PaxDb" id="44689-DDB0267140"/>
<dbReference type="EnsemblProtists" id="EAL65561">
    <property type="protein sequence ID" value="EAL65561"/>
    <property type="gene ID" value="DDB_G0283893"/>
</dbReference>
<dbReference type="GeneID" id="8624303"/>
<dbReference type="KEGG" id="ddi:DDB_G0283893"/>
<dbReference type="dictyBase" id="DDB_G0283893"/>
<dbReference type="VEuPathDB" id="AmoebaDB:DDB_G0283893"/>
<dbReference type="eggNOG" id="KOG1776">
    <property type="taxonomic scope" value="Eukaryota"/>
</dbReference>
<dbReference type="HOGENOM" id="CLU_223060_0_0_1"/>
<dbReference type="InParanoid" id="Q54QG5"/>
<dbReference type="OMA" id="VHRMEEH"/>
<dbReference type="PhylomeDB" id="Q54QG5"/>
<dbReference type="Reactome" id="R-DDI-6798695">
    <property type="pathway name" value="Neutrophil degranulation"/>
</dbReference>
<dbReference type="Reactome" id="R-DDI-983168">
    <property type="pathway name" value="Antigen processing: Ubiquitination &amp; Proteasome degradation"/>
</dbReference>
<dbReference type="UniPathway" id="UPA00143"/>
<dbReference type="PRO" id="PR:Q54QG5"/>
<dbReference type="Proteomes" id="UP000002195">
    <property type="component" value="Chromosome 4"/>
</dbReference>
<dbReference type="GO" id="GO:0016740">
    <property type="term" value="F:transferase activity"/>
    <property type="evidence" value="ECO:0007669"/>
    <property type="project" value="UniProtKB-KW"/>
</dbReference>
<dbReference type="GO" id="GO:0008270">
    <property type="term" value="F:zinc ion binding"/>
    <property type="evidence" value="ECO:0007669"/>
    <property type="project" value="UniProtKB-KW"/>
</dbReference>
<dbReference type="GO" id="GO:0016567">
    <property type="term" value="P:protein ubiquitination"/>
    <property type="evidence" value="ECO:0007669"/>
    <property type="project" value="UniProtKB-UniPathway"/>
</dbReference>
<dbReference type="CDD" id="cd19681">
    <property type="entry name" value="UBR-box_BIG_like"/>
    <property type="match status" value="1"/>
</dbReference>
<dbReference type="CDD" id="cd02249">
    <property type="entry name" value="ZZ"/>
    <property type="match status" value="1"/>
</dbReference>
<dbReference type="Gene3D" id="3.30.60.90">
    <property type="match status" value="1"/>
</dbReference>
<dbReference type="InterPro" id="IPR025704">
    <property type="entry name" value="E3_Ub_ligase_UBR4_C"/>
</dbReference>
<dbReference type="InterPro" id="IPR045189">
    <property type="entry name" value="UBR4-like"/>
</dbReference>
<dbReference type="InterPro" id="IPR056530">
    <property type="entry name" value="UBR4-like_dom"/>
</dbReference>
<dbReference type="InterPro" id="IPR036322">
    <property type="entry name" value="WD40_repeat_dom_sf"/>
</dbReference>
<dbReference type="InterPro" id="IPR003126">
    <property type="entry name" value="Znf_UBR"/>
</dbReference>
<dbReference type="InterPro" id="IPR000433">
    <property type="entry name" value="Znf_ZZ"/>
</dbReference>
<dbReference type="InterPro" id="IPR043145">
    <property type="entry name" value="Znf_ZZ_sf"/>
</dbReference>
<dbReference type="PANTHER" id="PTHR21725">
    <property type="entry name" value="E3 UBIQUITIN-PROTEIN LIGASE UBR4"/>
    <property type="match status" value="1"/>
</dbReference>
<dbReference type="PANTHER" id="PTHR21725:SF1">
    <property type="entry name" value="E3 UBIQUITIN-PROTEIN LIGASE UBR4"/>
    <property type="match status" value="1"/>
</dbReference>
<dbReference type="Pfam" id="PF13764">
    <property type="entry name" value="E3_UbLigase_R4"/>
    <property type="match status" value="1"/>
</dbReference>
<dbReference type="Pfam" id="PF24079">
    <property type="entry name" value="UBR4"/>
    <property type="match status" value="1"/>
</dbReference>
<dbReference type="Pfam" id="PF00569">
    <property type="entry name" value="ZZ"/>
    <property type="match status" value="1"/>
</dbReference>
<dbReference type="SMART" id="SM00396">
    <property type="entry name" value="ZnF_UBR1"/>
    <property type="match status" value="1"/>
</dbReference>
<dbReference type="SMART" id="SM00291">
    <property type="entry name" value="ZnF_ZZ"/>
    <property type="match status" value="1"/>
</dbReference>
<dbReference type="SUPFAM" id="SSF57850">
    <property type="entry name" value="RING/U-box"/>
    <property type="match status" value="1"/>
</dbReference>
<dbReference type="SUPFAM" id="SSF50978">
    <property type="entry name" value="WD40 repeat-like"/>
    <property type="match status" value="1"/>
</dbReference>
<dbReference type="PROSITE" id="PS52043">
    <property type="entry name" value="UBR4_E3"/>
    <property type="match status" value="1"/>
</dbReference>
<dbReference type="PROSITE" id="PS51157">
    <property type="entry name" value="ZF_UBR"/>
    <property type="match status" value="1"/>
</dbReference>
<dbReference type="PROSITE" id="PS01357">
    <property type="entry name" value="ZF_ZZ_1"/>
    <property type="match status" value="1"/>
</dbReference>
<dbReference type="PROSITE" id="PS50135">
    <property type="entry name" value="ZF_ZZ_2"/>
    <property type="match status" value="1"/>
</dbReference>
<sequence length="5875" mass="658224">MDPDLLLAIALSESLMDNNNNNNNNNNNNNNNNNNNNNNNNNNNSNNNNNKNVEMGEAEKQPPEDKISTYFKELTGLLKKDTIVKNLKPLLALLKSKELLLDQIYFLSKILESISFNIVFNGKEKDKVENEFEIFCKDTIEFCLNILEKWGNGDIDLSTIPNINNNNNNDNNSNNKTDDNNQSNNSKKLTPLTLLSVIDMLCCIEFPSTEIDKTFDNIPSFLNVSELDEILDSNNQDNKENKKEDKESSKPIASSPIPITTTNIEKPTIATTTTTSTSNSNIFSQFLNEGLKVEGLNETMIPSFKPSTLPPPPPTPTSTITTQPLPSSTITQPESYSNCGNGEGGMETFAKVNSNYFNNKLFGSSRLLSICSKLLVPYHADLTSPSTVEKFETFKKNQTLIQDFMSNVQDIIFSEGFDSLDKQTAPWTIDFLGNLIGTLRSFQSFSISNNLSYYNNDSKFLSKHLFENIFEVLGSKLDYPGLQIKAEIFFSLCILSDVNKMKIDIVKLLERDQSTPLDKEYLVLNPQLIILAIDLVFKNIREITEIQNNNNNNNNVDFNELLKIDSTVDQSTITGVEKPTTKFLLSEPLDGTGVEGWFDFSNENKQLFSKDSLFKLFIKPQLLDTLFNILYLCYFKPTKSTTTTTTATTTTTTTTTNESIPMETTRSSTPIPIVNNNNNNNDSKSNSKKSPPIKINDSYFGEDDLFGGLFDQSSTSIRSSSNKVNEGTPKSSTTTTTTNATIISTPANSNIKESSNDDGDHDEDIMKCKIFNLLSFIYLLQDDPMYKEFTKNHLTLTHLRILFTLIAPSSNPSIMAPKSKNSTVFKLLTNICFLLCKNSIISDTLLDQFIGFVFTSVDSQLLTLPKEQLAWIAWIFVKKQSTMVVGATNSVMVVSLWDGFLKNSSRVIREVSLVSSPFKEVISLDYILLLLFSFHTLDEKHRLGIVSTLCQSFNEIVCKVKSDQSFLPNSLMLSRCLMVFNYILFNFETVNPILSKLFNSQLLSFKKSNYQVGEFYKLSIVNLNYSGTIEKLIKKSAFINNDGLIGLPEFYDLYFIPPPNNTLTSPSKSINSSSNNILSPITPTNTTTTTTTTTPSTTSIPTNNEDWFNHSNNLEKITSLLQKSTNNDNCYEQFYNNIVSLCSLTPTVKSTQDGSSLDSLYFDYIVASSLKFLSCLPLSLSFLKAIKDPQTFTTVSNTSPIFITYLKSIYPSQCNNPEIPWLAHTENILTHFKYNGGTPSDSSLRVNGIVQSSLAYLTKVFDVGTSLNINKKLAESSGNVDTSGGGDSYFDGWESLFNDDDDEEEDEEEEEEMDEDDSENDEDEDSEESEKEQNKDNLKSSSSTVPTTTTTAAAATTTATATTKESTIRSNISTLLPSLINFIIDTLGHYRGIYKKSLIEQLSNHSNALHVKLIQELYILSSKTEVLEVMKSLDFSTDDRNTVEKWDEEYKPDPLVPKDQKQLFGWSVQPYNPSFTEGKVYSVALQSIIRLLLTLSNQALVHWDNVTETNPDSTKPILSKVSELIFEQVYISTDRSFSFLKDHYDNYSSLISGAQSGYLINQIKLANFESISKILIDPTFSPSNNSSNKFLSENSYLLTVLIGYVDSLISMSKLNGSHIYCYYISGFNGSVARGTRDFEFVLPTGNLQLLISVLFNNPCEKFNLKVLSALVHFMSISTPSEFFTSFRSHCITTFSKIPINDLKLWFEQKLLGINNFEKNSTATNGTEKMDIEIILNNNNNNNNKVEEKSGKINSTVSIQEQIIRLIGLLIGNKDLSCYSKDYLQQQAAAALAAKESEELLQQQLLQESEGKKKKRSSGSSTPTKIPGKKTPITSGQDSNSSPALTASSSPPSLEFVDWDEKVTSFALTLFDVLLSSLNNAFTVWIDQPKLLKGYFELLQFIAMGQHQLLKLFNEISNLSSPLLTNPTIDQLESLNLLVEFIENILDLSKSLKKPSSDQQHHSGGCHHSNHHHHHHHSRKDEVMVDKSSITNVVDEDILKDDVEVMDEEDEDELQYLSEDEKVVNGNENTGEEDDEERKLSSKVCTYTFTKNDYIDQHWYFCYTCGLKFSEGCCSVCVKVCHKGHQVSYSRYSRFFCDCGAGAGKGNPCKALKPRLYSPPKQLQQQQQQQQPQQPPQDQQKNVAAEQQPQQQQEEQQVASTTSSATNTNDQPIIPDSLSSSSSNSSPSFNNNNNNNNNGTTGSGNTFSSINNYFFNLPTQQDKEQLFNEIFNDKSNIISKLSELYPKLIEMYKKVQTDLIKPQSDSNSNKLEVFEESSTQSISSREIISKTDIFTTKKVSKNGTFEAKLKLEGVEGNQLKTFLSSGPIQRKAIASTSKGLLAIAEGDSVSLFNSSKILDDDAQLDKHSFSKALSKSSVAYPIVSMVFNPLNERFLAVVGFKEVKILTINQKDEIVDQLVIDLSLDALGETIYIIKVEWIIGSQVELAIVTNEFIKIYDLSKDNLSPIHFFSLLEDSIKDMCLVQKNGKNHILALSNYGLLYFQAIEDSIDNESCIMIETLQVPINKISAGVSVHYNIDLDLVIASYTNGECYAFQVNDTMTNVTRSFPIMDPAKKLPMPAQYFINLSPMFPNVYACLAARGGYLLGFKMGTKDISIQNLKLTQRVEGMTILNRSSPKLLILFDDGSIGRYDFNLENTIQQPLPTTSTTTDSINESDKKGLDILLYLKSKYQDSINKNNSGSSINSSGNNVATVSSSTTSTSAVIKSPPPLSSLLLQPTTTTTTSPVFPIDFFESTECITPNVKYGGDPLQWFSQDVIKQKLASNDEYIVCQSLETLTLVIMNNNFNNAICGIRILVGNASTKHIPTEIRVFNRTIQLKEGQRRWYDIPFTTEETLRSIKKVSFTAGSTFTMGTSPIIDQVEVYAKNKDSLGFNDSDDSDDEFPTVDENVTSSGLSTSAGGSGGGVAGTNDSTADKHTPLEIVILHCFNSLKNYFSNHVANDDSQKFIELKEKTLSILPSMITDSQLSFVRSSIKKLLKILSTNSEHYQTLKHSIQLKYASQTVSSILSNSGGTIPNSADLEKLDYLVAALKKISSSNPNNLEKYLFKDHPNFLSDLLTIYRNTTSPSSSKGKSSSASASSSSSTTTATSTLPSNTQSGSNNGAVSSNALLYSDSFISNLVQLLWNCQRSKIFSTDLIFTLLKSLLSHSNEIIRTRSSLILVSFISKSGNNSTVANLLPPPSSSSNENVVDNDNTNKENEGDIQMVDEVLFSCDLCNINPITGKRWNCSNCGDFDLCNQCYQNPEKDHPKDHIFKEFIIDEPMKDGDEKESTNEPPQQQKQQDQQLQQDLQDDSEYDEELKIAISMSLNNNNNNNNNNESMDTSTLTTTTTTTNKTTPTTNEEPMVGFIKLIIEEIIVSYEKGFSFMIPYMQILYSTILHNTTFILNNNQLSNQLVTTLVNLISKHKSNLSKFLSTKSNNLEGDILIFSLLSLLLDSDEQKRQKIQSKQTTTTAAAAATTTTTATATVTTPSVVTTPHSLPSTLIYHLSKLFIDRDIIQLLRLWIEQLYTCISESHGLSVGEERDSPFGALLVPSIDENQTLPKNRFTPFFGKYLPQSMGSIHLLLSKAIFKLMITFYRCERRKKSITQTTPTLIKPSEWTNLICSFIHSKKTVSIVKYPKKLLFLIYQTKSSYYSIRDEFLLKKKFAGILDLEGKTKGFSDEIGYDHLAKLISYLTLMLEVASDRPKSWQFFCAHNDVLPKLYKILFNLAEEPSSLLLELLTYVFVDEIAEQPLSSTSQDTQQESSNNNNNNNSNDILMQDVDTKAKHISIFLQEQYFNVLIFNILLESNSSDLRSIASSFIYYLWRSSNNEQRIFINKSLWSKLNNVASYGKNASEFMDLLTYFLNETDSQSWKDQHNEFSNKLIESFKQQNQISLNHPNSQIYNSLGKILEFDGYYLESEPCLVCNNPEVQYQTSRLESLKQEVKFSEYSQLIKFNGVYNISKIMIQLHDVKKGKMIKTINLFYNNKPVADIGDLKGKFNQWKKLKQVHFTPSQTEKAVVFQIPISARNFMIEYFDFHDNLQAASSEKLQCPRCSRIVTDKHGICKNCHENAYQCKHCRNINYENLDAFLCNECGFCKHAKFDYSFVCKPTIAIEKIENQEDHKRAIQTIEKESENAHKKYQRLIGFKKVISGLINSFETQEPWSKDDLIKSSGGTISIANTSTNSTGSNNQSINSSSGNISTNSSSSSSSSFGISNQSSSGNGGGGVGSGGGGVINQSGTSNNSSFLTLRINKKIGYLSRLYERECRNIYEGLSKSVQILQTNRMEISKYMNFISGGGQPSSNDKQQQQQQQQQQSSRQCPVSIHLREENKCYGCSNSYIEQVLCLLNSFCRNSELTPIKNLLIEKGLPKEIFFNNIHHGKSIAKGWAKSSLSYLTKSNIDCTSMVNQWIKDKIYYTLCYYSSLDVPNMVSSEISLLKECSSLSDNIWPQRLSFIMELFFKALSSGSQSPVVSEYIILPCLKIIIYLCTLDRKGAFITKDAKDLEISQKLLATRFEKLKSSKKQAIALAATATATATAANASLTSTIEKKIEALSSLLSPNTVNNIALSVASSLLSPQQMQLQIQQQIALQQQQIQQQIQQQQQQLNESVSGLKILSPSSSSSSPSGVGATGSENGGGGSGSSSGSSVSGSGSISSSQDPNILSIFDNDTSNAGANESWDGDDNPIANAWSSKYENYLSNFNVNSSIGEISKSLKPLSQDELKSKYFKRWYAQVKKRKQQQQQQSSGIGYATQSSFEVLFEEKWLEKLLFNSTSSIRLEIITLMGILSKNSNSRSLKFLDLLTKILPNATEAGEYSAEFFGLFNSFISTSQDRKIYLAVKGFIPFICDAIIKEIEHIKSKEGSFSTDVSQGFVLKTLVAILKSFLDVPTLKAKMKKDNMLEKVLDAFLSLRGVIVQKNKLTEDSVRYLQELMKSLNNESVQDNKKFMAANIKALAKYQSDGRTPIFIFEQLCNIVCPTKPDPIYQLILFKAASQEEYIRGSMNRNPYTSNTFGGPLMRDVKNKICKALDLGSFLDDDNGMELLVDNKIIKLDLPIKKVYELVWKKSPQALRTADINIPMNVVYRLQGLDGEATEEIIETLNDNNSEEKDPEVEYEITSVMAECGGLESMISMIERINDFSIEKELAQLVIKLLYHCCKIKINRQKLLTLNTVGRLLEKLKQAFHQPELSEHLLVIIESVVSEANRDYLRGSNSSTSLSHHKDINEAQEQMNMFLDKLNGAQVMSNPKIIQAITRIIPFLTYGHTEIMDYLVDFFTPYLNFQEFDDSKSKDTNHVYHLDFFTKLMENTRPDSNGRSIRSIIIKRGITKSLVDYLLNYFPENGDKTSQEWLSSLEKPALPFVLVLLKGLAMGHEPTQNMTLESNLIKRIHILEETAGTSAKIGSLAENLLESIAEGNEKTSKIVSDTRKESKMEKLSHAQKHREDVLKQLGLAQQGKHIMANVVPGSIEDLDDDEGFTCMVCREGYSFKPTDVLGIYTFSKRIPLTSVGETTCPPSSTTNVAASLSLSPSSSGGGGGGALYYGFTTVTHFNFIHFNCHRDATKADRSMKVPKEEWEGAALRNQQTKCNGLFPVLPPKMNSDAFTPYSDKFWVNLNNISRVEGPKFRILSHDLKFLLIRLAKDESFSTDSKGGGKESNIRIAPMFVQLGMFLLDQKLVGGNSANQLRRPQFEKTLAQFTTLPLETAITSMYQMLSDNVPYFLVVSIFLHSPKEFENQKFNYLTKLLAYAFVDYLTTNTKNGLSSPDEPSKDKLFDITRPWLIFFSLLSKFHSIIKPSSCTEENWIQETKNHLSTNCTKIQVDVKELLNCFENELKEFQDEMEFFDDEGLLKNVLLNNKDSNEYLLKLYKSVKSNKK</sequence>
<accession>Q54QG5</accession>
<reference key="1">
    <citation type="journal article" date="2005" name="Nature">
        <title>The genome of the social amoeba Dictyostelium discoideum.</title>
        <authorList>
            <person name="Eichinger L."/>
            <person name="Pachebat J.A."/>
            <person name="Gloeckner G."/>
            <person name="Rajandream M.A."/>
            <person name="Sucgang R."/>
            <person name="Berriman M."/>
            <person name="Song J."/>
            <person name="Olsen R."/>
            <person name="Szafranski K."/>
            <person name="Xu Q."/>
            <person name="Tunggal B."/>
            <person name="Kummerfeld S."/>
            <person name="Madera M."/>
            <person name="Konfortov B.A."/>
            <person name="Rivero F."/>
            <person name="Bankier A.T."/>
            <person name="Lehmann R."/>
            <person name="Hamlin N."/>
            <person name="Davies R."/>
            <person name="Gaudet P."/>
            <person name="Fey P."/>
            <person name="Pilcher K."/>
            <person name="Chen G."/>
            <person name="Saunders D."/>
            <person name="Sodergren E.J."/>
            <person name="Davis P."/>
            <person name="Kerhornou A."/>
            <person name="Nie X."/>
            <person name="Hall N."/>
            <person name="Anjard C."/>
            <person name="Hemphill L."/>
            <person name="Bason N."/>
            <person name="Farbrother P."/>
            <person name="Desany B."/>
            <person name="Just E."/>
            <person name="Morio T."/>
            <person name="Rost R."/>
            <person name="Churcher C.M."/>
            <person name="Cooper J."/>
            <person name="Haydock S."/>
            <person name="van Driessche N."/>
            <person name="Cronin A."/>
            <person name="Goodhead I."/>
            <person name="Muzny D.M."/>
            <person name="Mourier T."/>
            <person name="Pain A."/>
            <person name="Lu M."/>
            <person name="Harper D."/>
            <person name="Lindsay R."/>
            <person name="Hauser H."/>
            <person name="James K.D."/>
            <person name="Quiles M."/>
            <person name="Madan Babu M."/>
            <person name="Saito T."/>
            <person name="Buchrieser C."/>
            <person name="Wardroper A."/>
            <person name="Felder M."/>
            <person name="Thangavelu M."/>
            <person name="Johnson D."/>
            <person name="Knights A."/>
            <person name="Loulseged H."/>
            <person name="Mungall K.L."/>
            <person name="Oliver K."/>
            <person name="Price C."/>
            <person name="Quail M.A."/>
            <person name="Urushihara H."/>
            <person name="Hernandez J."/>
            <person name="Rabbinowitsch E."/>
            <person name="Steffen D."/>
            <person name="Sanders M."/>
            <person name="Ma J."/>
            <person name="Kohara Y."/>
            <person name="Sharp S."/>
            <person name="Simmonds M.N."/>
            <person name="Spiegler S."/>
            <person name="Tivey A."/>
            <person name="Sugano S."/>
            <person name="White B."/>
            <person name="Walker D."/>
            <person name="Woodward J.R."/>
            <person name="Winckler T."/>
            <person name="Tanaka Y."/>
            <person name="Shaulsky G."/>
            <person name="Schleicher M."/>
            <person name="Weinstock G.M."/>
            <person name="Rosenthal A."/>
            <person name="Cox E.C."/>
            <person name="Chisholm R.L."/>
            <person name="Gibbs R.A."/>
            <person name="Loomis W.F."/>
            <person name="Platzer M."/>
            <person name="Kay R.R."/>
            <person name="Williams J.G."/>
            <person name="Dear P.H."/>
            <person name="Noegel A.A."/>
            <person name="Barrell B.G."/>
            <person name="Kuspa A."/>
        </authorList>
    </citation>
    <scope>NUCLEOTIDE SEQUENCE [LARGE SCALE GENOMIC DNA]</scope>
    <source>
        <strain>AX4</strain>
    </source>
</reference>
<feature type="chain" id="PRO_0000369247" description="Probable E3 ubiquitin-protein ligase DDB_G0283893">
    <location>
        <begin position="1"/>
        <end position="5875"/>
    </location>
</feature>
<feature type="domain" description="UIM" evidence="7">
    <location>
        <begin position="3313"/>
        <end position="3332"/>
    </location>
</feature>
<feature type="domain" description="UZI" evidence="5">
    <location>
        <begin position="5623"/>
        <end position="5870"/>
    </location>
</feature>
<feature type="zinc finger region" description="UBR-type" evidence="4">
    <location>
        <begin position="2042"/>
        <end position="2113"/>
    </location>
</feature>
<feature type="zinc finger region" description="ZZ-type" evidence="3">
    <location>
        <begin position="3226"/>
        <end position="3280"/>
    </location>
</feature>
<feature type="zinc finger region" description="HemiRING-type" evidence="5">
    <location>
        <begin position="5476"/>
        <end position="5620"/>
    </location>
</feature>
<feature type="region of interest" description="Disordered" evidence="6">
    <location>
        <begin position="17"/>
        <end position="64"/>
    </location>
</feature>
<feature type="region of interest" description="Disordered" evidence="6">
    <location>
        <begin position="164"/>
        <end position="185"/>
    </location>
</feature>
<feature type="region of interest" description="Disordered" evidence="6">
    <location>
        <begin position="232"/>
        <end position="276"/>
    </location>
</feature>
<feature type="region of interest" description="Disordered" evidence="6">
    <location>
        <begin position="302"/>
        <end position="342"/>
    </location>
</feature>
<feature type="region of interest" description="Disordered" evidence="6">
    <location>
        <begin position="642"/>
        <end position="693"/>
    </location>
</feature>
<feature type="region of interest" description="Disordered" evidence="6">
    <location>
        <begin position="716"/>
        <end position="740"/>
    </location>
</feature>
<feature type="region of interest" description="Disordered" evidence="6">
    <location>
        <begin position="1081"/>
        <end position="1101"/>
    </location>
</feature>
<feature type="region of interest" description="Disordered" evidence="6">
    <location>
        <begin position="1291"/>
        <end position="1367"/>
    </location>
</feature>
<feature type="region of interest" description="Disordered" evidence="6">
    <location>
        <begin position="1806"/>
        <end position="1851"/>
    </location>
</feature>
<feature type="region of interest" description="Disordered" evidence="6">
    <location>
        <begin position="1952"/>
        <end position="1982"/>
    </location>
</feature>
<feature type="region of interest" description="Disordered" evidence="6">
    <location>
        <begin position="2008"/>
        <end position="2036"/>
    </location>
</feature>
<feature type="region of interest" description="Disordered" evidence="6">
    <location>
        <begin position="2109"/>
        <end position="2203"/>
    </location>
</feature>
<feature type="region of interest" description="Disordered" evidence="6">
    <location>
        <begin position="2893"/>
        <end position="2930"/>
    </location>
</feature>
<feature type="region of interest" description="Disordered" evidence="6">
    <location>
        <begin position="3083"/>
        <end position="3119"/>
    </location>
</feature>
<feature type="region of interest" description="Disordered" evidence="6">
    <location>
        <begin position="3195"/>
        <end position="3214"/>
    </location>
</feature>
<feature type="region of interest" description="Disordered" evidence="6">
    <location>
        <begin position="3282"/>
        <end position="3312"/>
    </location>
</feature>
<feature type="region of interest" description="Disordered" evidence="6">
    <location>
        <begin position="3326"/>
        <end position="3359"/>
    </location>
</feature>
<feature type="region of interest" description="Disordered" evidence="6">
    <location>
        <begin position="3754"/>
        <end position="3776"/>
    </location>
</feature>
<feature type="region of interest" description="Disordered" evidence="6">
    <location>
        <begin position="4182"/>
        <end position="4237"/>
    </location>
</feature>
<feature type="region of interest" description="Disordered" evidence="6">
    <location>
        <begin position="4295"/>
        <end position="4323"/>
    </location>
</feature>
<feature type="region of interest" description="Disordered" evidence="6">
    <location>
        <begin position="4616"/>
        <end position="4671"/>
    </location>
</feature>
<feature type="region of interest" description="UBR4 E3 catalytic module" evidence="5">
    <location>
        <begin position="5357"/>
        <end position="5870"/>
    </location>
</feature>
<feature type="coiled-coil region" evidence="2">
    <location>
        <begin position="1300"/>
        <end position="1328"/>
    </location>
</feature>
<feature type="coiled-coil region" evidence="2">
    <location>
        <begin position="4118"/>
        <end position="4146"/>
    </location>
</feature>
<feature type="coiled-coil region" evidence="2">
    <location>
        <begin position="4585"/>
        <end position="4618"/>
    </location>
</feature>
<feature type="coiled-coil region" evidence="2">
    <location>
        <begin position="5819"/>
        <end position="5846"/>
    </location>
</feature>
<feature type="compositionally biased region" description="Low complexity" evidence="6">
    <location>
        <begin position="18"/>
        <end position="52"/>
    </location>
</feature>
<feature type="compositionally biased region" description="Basic and acidic residues" evidence="6">
    <location>
        <begin position="237"/>
        <end position="249"/>
    </location>
</feature>
<feature type="compositionally biased region" description="Low complexity" evidence="6">
    <location>
        <begin position="250"/>
        <end position="276"/>
    </location>
</feature>
<feature type="compositionally biased region" description="Low complexity" evidence="6">
    <location>
        <begin position="317"/>
        <end position="333"/>
    </location>
</feature>
<feature type="compositionally biased region" description="Low complexity" evidence="6">
    <location>
        <begin position="642"/>
        <end position="656"/>
    </location>
</feature>
<feature type="compositionally biased region" description="Polar residues" evidence="6">
    <location>
        <begin position="657"/>
        <end position="669"/>
    </location>
</feature>
<feature type="compositionally biased region" description="Low complexity" evidence="6">
    <location>
        <begin position="670"/>
        <end position="693"/>
    </location>
</feature>
<feature type="compositionally biased region" description="Polar residues" evidence="6">
    <location>
        <begin position="716"/>
        <end position="725"/>
    </location>
</feature>
<feature type="compositionally biased region" description="Low complexity" evidence="6">
    <location>
        <begin position="728"/>
        <end position="740"/>
    </location>
</feature>
<feature type="compositionally biased region" description="Acidic residues" evidence="6">
    <location>
        <begin position="1297"/>
        <end position="1330"/>
    </location>
</feature>
<feature type="compositionally biased region" description="Low complexity" evidence="6">
    <location>
        <begin position="1347"/>
        <end position="1363"/>
    </location>
</feature>
<feature type="compositionally biased region" description="Low complexity" evidence="6">
    <location>
        <begin position="1838"/>
        <end position="1851"/>
    </location>
</feature>
<feature type="compositionally biased region" description="Basic residues" evidence="6">
    <location>
        <begin position="1963"/>
        <end position="1977"/>
    </location>
</feature>
<feature type="compositionally biased region" description="Low complexity" evidence="6">
    <location>
        <begin position="2118"/>
        <end position="2168"/>
    </location>
</feature>
<feature type="compositionally biased region" description="Low complexity" evidence="6">
    <location>
        <begin position="2178"/>
        <end position="2203"/>
    </location>
</feature>
<feature type="compositionally biased region" description="Acidic residues" evidence="6">
    <location>
        <begin position="2893"/>
        <end position="2903"/>
    </location>
</feature>
<feature type="compositionally biased region" description="Low complexity" evidence="6">
    <location>
        <begin position="2908"/>
        <end position="2917"/>
    </location>
</feature>
<feature type="compositionally biased region" description="Low complexity" evidence="6">
    <location>
        <begin position="3201"/>
        <end position="3211"/>
    </location>
</feature>
<feature type="compositionally biased region" description="Low complexity" evidence="6">
    <location>
        <begin position="3295"/>
        <end position="3307"/>
    </location>
</feature>
<feature type="compositionally biased region" description="Low complexity" evidence="6">
    <location>
        <begin position="3327"/>
        <end position="3358"/>
    </location>
</feature>
<feature type="compositionally biased region" description="Polar residues" evidence="6">
    <location>
        <begin position="3754"/>
        <end position="3763"/>
    </location>
</feature>
<feature type="compositionally biased region" description="Low complexity" evidence="6">
    <location>
        <begin position="3764"/>
        <end position="3774"/>
    </location>
</feature>
<feature type="compositionally biased region" description="Low complexity" evidence="6">
    <location>
        <begin position="4182"/>
        <end position="4222"/>
    </location>
</feature>
<feature type="compositionally biased region" description="Gly residues" evidence="6">
    <location>
        <begin position="4223"/>
        <end position="4236"/>
    </location>
</feature>
<feature type="compositionally biased region" description="Low complexity" evidence="6">
    <location>
        <begin position="4308"/>
        <end position="4317"/>
    </location>
</feature>
<feature type="compositionally biased region" description="Low complexity" evidence="6">
    <location>
        <begin position="4619"/>
        <end position="4635"/>
    </location>
</feature>
<feature type="compositionally biased region" description="Low complexity" evidence="6">
    <location>
        <begin position="4645"/>
        <end position="4659"/>
    </location>
</feature>
<feature type="binding site" evidence="3">
    <location>
        <position position="3231"/>
    </location>
    <ligand>
        <name>Zn(2+)</name>
        <dbReference type="ChEBI" id="CHEBI:29105"/>
        <label>1</label>
    </ligand>
</feature>
<feature type="binding site" evidence="3">
    <location>
        <position position="3234"/>
    </location>
    <ligand>
        <name>Zn(2+)</name>
        <dbReference type="ChEBI" id="CHEBI:29105"/>
        <label>1</label>
    </ligand>
</feature>
<feature type="binding site" evidence="3">
    <location>
        <position position="3246"/>
    </location>
    <ligand>
        <name>Zn(2+)</name>
        <dbReference type="ChEBI" id="CHEBI:29105"/>
        <label>2</label>
    </ligand>
</feature>
<feature type="binding site" evidence="3">
    <location>
        <position position="3249"/>
    </location>
    <ligand>
        <name>Zn(2+)</name>
        <dbReference type="ChEBI" id="CHEBI:29105"/>
        <label>2</label>
    </ligand>
</feature>
<feature type="binding site" evidence="3">
    <location>
        <position position="3255"/>
    </location>
    <ligand>
        <name>Zn(2+)</name>
        <dbReference type="ChEBI" id="CHEBI:29105"/>
        <label>1</label>
    </ligand>
</feature>
<feature type="binding site" evidence="3">
    <location>
        <position position="3258"/>
    </location>
    <ligand>
        <name>Zn(2+)</name>
        <dbReference type="ChEBI" id="CHEBI:29105"/>
        <label>1</label>
    </ligand>
</feature>
<feature type="binding site" evidence="3">
    <location>
        <position position="3266"/>
    </location>
    <ligand>
        <name>Zn(2+)</name>
        <dbReference type="ChEBI" id="CHEBI:29105"/>
        <label>2</label>
    </ligand>
</feature>
<feature type="binding site" evidence="3">
    <location>
        <position position="3270"/>
    </location>
    <ligand>
        <name>Zn(2+)</name>
        <dbReference type="ChEBI" id="CHEBI:29105"/>
        <label>2</label>
    </ligand>
</feature>
<feature type="binding site" evidence="5">
    <location>
        <position position="5479"/>
    </location>
    <ligand>
        <name>Zn(2+)</name>
        <dbReference type="ChEBI" id="CHEBI:29105"/>
        <label>3</label>
    </ligand>
</feature>
<feature type="binding site" evidence="5">
    <location>
        <position position="5482"/>
    </location>
    <ligand>
        <name>Zn(2+)</name>
        <dbReference type="ChEBI" id="CHEBI:29105"/>
        <label>3</label>
    </ligand>
</feature>
<feature type="binding site" evidence="5">
    <location>
        <position position="5554"/>
    </location>
    <ligand>
        <name>Zn(2+)</name>
        <dbReference type="ChEBI" id="CHEBI:29105"/>
        <label>3</label>
    </ligand>
</feature>
<feature type="binding site" evidence="5">
    <location>
        <position position="5557"/>
    </location>
    <ligand>
        <name>Zn(2+)</name>
        <dbReference type="ChEBI" id="CHEBI:29105"/>
        <label>3</label>
    </ligand>
</feature>
<proteinExistence type="inferred from homology"/>
<evidence type="ECO:0000250" key="1"/>
<evidence type="ECO:0000255" key="2"/>
<evidence type="ECO:0000255" key="3">
    <source>
        <dbReference type="PROSITE-ProRule" id="PRU00228"/>
    </source>
</evidence>
<evidence type="ECO:0000255" key="4">
    <source>
        <dbReference type="PROSITE-ProRule" id="PRU00508"/>
    </source>
</evidence>
<evidence type="ECO:0000255" key="5">
    <source>
        <dbReference type="PROSITE-ProRule" id="PRU01388"/>
    </source>
</evidence>
<evidence type="ECO:0000256" key="6">
    <source>
        <dbReference type="SAM" id="MobiDB-lite"/>
    </source>
</evidence>
<evidence type="ECO:0000305" key="7"/>
<gene>
    <name type="ORF">DDB_G0283893</name>
</gene>